<dbReference type="EC" id="4.1.1.33" evidence="4"/>
<dbReference type="EMBL" id="U49261">
    <property type="protein sequence ID" value="AAC49252.1"/>
    <property type="molecule type" value="mRNA"/>
</dbReference>
<dbReference type="EMBL" id="X97557">
    <property type="protein sequence ID" value="CAA66158.1"/>
    <property type="molecule type" value="Genomic_DNA"/>
</dbReference>
<dbReference type="EMBL" id="Z71658">
    <property type="protein sequence ID" value="CAA96324.1"/>
    <property type="molecule type" value="Genomic_DNA"/>
</dbReference>
<dbReference type="EMBL" id="AY693152">
    <property type="protein sequence ID" value="AAT93171.1"/>
    <property type="molecule type" value="Genomic_DNA"/>
</dbReference>
<dbReference type="EMBL" id="M81698">
    <property type="protein sequence ID" value="AAA34506.2"/>
    <property type="molecule type" value="Genomic_DNA"/>
</dbReference>
<dbReference type="EMBL" id="BK006947">
    <property type="protein sequence ID" value="DAA10584.1"/>
    <property type="molecule type" value="Genomic_DNA"/>
</dbReference>
<dbReference type="PIR" id="S63374">
    <property type="entry name" value="S63374"/>
</dbReference>
<dbReference type="RefSeq" id="NP_014441.1">
    <property type="nucleotide sequence ID" value="NM_001183220.1"/>
</dbReference>
<dbReference type="PDB" id="1FI4">
    <property type="method" value="X-ray"/>
    <property type="resolution" value="2.27 A"/>
    <property type="chains" value="A=1-396"/>
</dbReference>
<dbReference type="PDBsum" id="1FI4"/>
<dbReference type="SMR" id="P32377"/>
<dbReference type="BioGRID" id="35868">
    <property type="interactions" value="273"/>
</dbReference>
<dbReference type="DIP" id="DIP-6729N"/>
<dbReference type="FunCoup" id="P32377">
    <property type="interactions" value="810"/>
</dbReference>
<dbReference type="IntAct" id="P32377">
    <property type="interactions" value="3"/>
</dbReference>
<dbReference type="MINT" id="P32377"/>
<dbReference type="STRING" id="4932.YNR043W"/>
<dbReference type="iPTMnet" id="P32377"/>
<dbReference type="PaxDb" id="4932-YNR043W"/>
<dbReference type="PeptideAtlas" id="P32377"/>
<dbReference type="EnsemblFungi" id="YNR043W_mRNA">
    <property type="protein sequence ID" value="YNR043W"/>
    <property type="gene ID" value="YNR043W"/>
</dbReference>
<dbReference type="GeneID" id="855779"/>
<dbReference type="KEGG" id="sce:YNR043W"/>
<dbReference type="AGR" id="SGD:S000005326"/>
<dbReference type="SGD" id="S000005326">
    <property type="gene designation" value="MVD1"/>
</dbReference>
<dbReference type="VEuPathDB" id="FungiDB:YNR043W"/>
<dbReference type="eggNOG" id="KOG2833">
    <property type="taxonomic scope" value="Eukaryota"/>
</dbReference>
<dbReference type="GeneTree" id="ENSGT00390000015359"/>
<dbReference type="HOGENOM" id="CLU_040369_4_2_1"/>
<dbReference type="InParanoid" id="P32377"/>
<dbReference type="OMA" id="LTLHAMM"/>
<dbReference type="OrthoDB" id="10253702at2759"/>
<dbReference type="BioCyc" id="MetaCyc:MONOMER-653"/>
<dbReference type="BioCyc" id="YEAST:MONOMER-653"/>
<dbReference type="BioCyc" id="YEAST:YNR043W-MONOMER"/>
<dbReference type="BRENDA" id="4.1.1.33">
    <property type="organism ID" value="984"/>
</dbReference>
<dbReference type="Reactome" id="R-SCE-191273">
    <property type="pathway name" value="Cholesterol biosynthesis"/>
</dbReference>
<dbReference type="Reactome" id="R-SCE-446199">
    <property type="pathway name" value="Synthesis of Dolichyl-phosphate"/>
</dbReference>
<dbReference type="SABIO-RK" id="P32377"/>
<dbReference type="UniPathway" id="UPA00057">
    <property type="reaction ID" value="UER00100"/>
</dbReference>
<dbReference type="BioGRID-ORCS" id="855779">
    <property type="hits" value="2 hits in 10 CRISPR screens"/>
</dbReference>
<dbReference type="EvolutionaryTrace" id="P32377"/>
<dbReference type="PRO" id="PR:P32377"/>
<dbReference type="Proteomes" id="UP000002311">
    <property type="component" value="Chromosome XIV"/>
</dbReference>
<dbReference type="RNAct" id="P32377">
    <property type="molecule type" value="protein"/>
</dbReference>
<dbReference type="GO" id="GO:0005737">
    <property type="term" value="C:cytoplasm"/>
    <property type="evidence" value="ECO:0007005"/>
    <property type="project" value="SGD"/>
</dbReference>
<dbReference type="GO" id="GO:0005829">
    <property type="term" value="C:cytosol"/>
    <property type="evidence" value="ECO:0000318"/>
    <property type="project" value="GO_Central"/>
</dbReference>
<dbReference type="GO" id="GO:0005773">
    <property type="term" value="C:vacuole"/>
    <property type="evidence" value="ECO:0000303"/>
    <property type="project" value="UniProt"/>
</dbReference>
<dbReference type="GO" id="GO:0005524">
    <property type="term" value="F:ATP binding"/>
    <property type="evidence" value="ECO:0007669"/>
    <property type="project" value="UniProtKB-KW"/>
</dbReference>
<dbReference type="GO" id="GO:0004163">
    <property type="term" value="F:diphosphomevalonate decarboxylase activity"/>
    <property type="evidence" value="ECO:0000314"/>
    <property type="project" value="SGD"/>
</dbReference>
<dbReference type="GO" id="GO:0006696">
    <property type="term" value="P:ergosterol biosynthetic process"/>
    <property type="evidence" value="ECO:0000314"/>
    <property type="project" value="UniProt"/>
</dbReference>
<dbReference type="GO" id="GO:0019287">
    <property type="term" value="P:isopentenyl diphosphate biosynthetic process, mevalonate pathway"/>
    <property type="evidence" value="ECO:0000318"/>
    <property type="project" value="GO_Central"/>
</dbReference>
<dbReference type="GO" id="GO:0016126">
    <property type="term" value="P:sterol biosynthetic process"/>
    <property type="evidence" value="ECO:0000315"/>
    <property type="project" value="SGD"/>
</dbReference>
<dbReference type="FunFam" id="3.30.230.10:FF:000018">
    <property type="entry name" value="Diphosphomevalonate decarboxylase"/>
    <property type="match status" value="1"/>
</dbReference>
<dbReference type="FunFam" id="3.30.70.890:FF:000005">
    <property type="entry name" value="Diphosphomevalonate decarboxylase"/>
    <property type="match status" value="1"/>
</dbReference>
<dbReference type="Gene3D" id="3.30.230.10">
    <property type="match status" value="1"/>
</dbReference>
<dbReference type="Gene3D" id="3.30.70.890">
    <property type="entry name" value="GHMP kinase, C-terminal domain"/>
    <property type="match status" value="1"/>
</dbReference>
<dbReference type="InterPro" id="IPR036554">
    <property type="entry name" value="GHMP_kinase_C_sf"/>
</dbReference>
<dbReference type="InterPro" id="IPR005935">
    <property type="entry name" value="Mev_decarb"/>
</dbReference>
<dbReference type="InterPro" id="IPR029765">
    <property type="entry name" value="Mev_diP_decarb"/>
</dbReference>
<dbReference type="InterPro" id="IPR053859">
    <property type="entry name" value="MVD-like_N"/>
</dbReference>
<dbReference type="InterPro" id="IPR041431">
    <property type="entry name" value="Mvd1_C"/>
</dbReference>
<dbReference type="InterPro" id="IPR020568">
    <property type="entry name" value="Ribosomal_Su5_D2-typ_SF"/>
</dbReference>
<dbReference type="InterPro" id="IPR014721">
    <property type="entry name" value="Ribsml_uS5_D2-typ_fold_subgr"/>
</dbReference>
<dbReference type="NCBIfam" id="TIGR01240">
    <property type="entry name" value="mevDPdecarb"/>
    <property type="match status" value="1"/>
</dbReference>
<dbReference type="PANTHER" id="PTHR10977">
    <property type="entry name" value="DIPHOSPHOMEVALONATE DECARBOXYLASE"/>
    <property type="match status" value="1"/>
</dbReference>
<dbReference type="PANTHER" id="PTHR10977:SF3">
    <property type="entry name" value="DIPHOSPHOMEVALONATE DECARBOXYLASE"/>
    <property type="match status" value="1"/>
</dbReference>
<dbReference type="Pfam" id="PF18376">
    <property type="entry name" value="MDD_C"/>
    <property type="match status" value="1"/>
</dbReference>
<dbReference type="Pfam" id="PF22700">
    <property type="entry name" value="MVD-like_N"/>
    <property type="match status" value="1"/>
</dbReference>
<dbReference type="PIRSF" id="PIRSF015950">
    <property type="entry name" value="Mev_P_decrbx"/>
    <property type="match status" value="1"/>
</dbReference>
<dbReference type="SUPFAM" id="SSF55060">
    <property type="entry name" value="GHMP Kinase, C-terminal domain"/>
    <property type="match status" value="1"/>
</dbReference>
<dbReference type="SUPFAM" id="SSF54211">
    <property type="entry name" value="Ribosomal protein S5 domain 2-like"/>
    <property type="match status" value="1"/>
</dbReference>
<comment type="function">
    <text evidence="4 5 7">Diphosphomevalonate decarboxylase; part of the second module of ergosterol biosynthesis pathway that includes the middle steps of the pathway (PubMed:8626466, PubMed:9244250). MVD1/ERG19 converts diphosphomevalonate into isopentenyl diphosphate (PubMed:8626466). The second module is carried out in the vacuole and involves the formation of farnesyl diphosphate, which is also an important intermediate in the biosynthesis of ubiquinone, dolichol, heme and prenylated proteins. Activity by the mevalonate kinase ERG12 first converts mevalonate into 5-phosphomevalonate. 5-phosphomevalonate is then further converted to 5-diphosphomevalonate by the phosphomevalonate kinase ERG8. The diphosphomevalonate decarboxylase MVD1/ERG19 then produces isopentenyl diphosphate. The isopentenyl-diphosphate delta-isomerase IDI1 then catalyzes the 1,3-allylic rearrangement of the homoallylic substrate isopentenyl (IPP) to its highly electrophilic allylic isomer, dimethylallyl diphosphate (DMAPP). Finally the farnesyl diphosphate synthase ERG20 catalyzes the sequential condensation of isopentenyl pyrophosphate with dimethylallyl pyrophosphate, and then with the resultant geranylpyrophosphate to the ultimate product farnesyl pyrophosphate (PubMed:32679672).</text>
</comment>
<comment type="catalytic activity">
    <reaction evidence="4">
        <text>(R)-5-diphosphomevalonate + ATP = isopentenyl diphosphate + ADP + phosphate + CO2</text>
        <dbReference type="Rhea" id="RHEA:23732"/>
        <dbReference type="ChEBI" id="CHEBI:16526"/>
        <dbReference type="ChEBI" id="CHEBI:30616"/>
        <dbReference type="ChEBI" id="CHEBI:43474"/>
        <dbReference type="ChEBI" id="CHEBI:57557"/>
        <dbReference type="ChEBI" id="CHEBI:128769"/>
        <dbReference type="ChEBI" id="CHEBI:456216"/>
        <dbReference type="EC" id="4.1.1.33"/>
    </reaction>
    <physiologicalReaction direction="left-to-right" evidence="4">
        <dbReference type="Rhea" id="RHEA:23733"/>
    </physiologicalReaction>
</comment>
<comment type="pathway">
    <text evidence="4">Isoprenoid biosynthesis; isopentenyl diphosphate biosynthesis via mevalonate pathway; isopentenyl diphosphate from (R)-mevalonate: step 3/3.</text>
</comment>
<comment type="subunit">
    <text evidence="2">Homodimer.</text>
</comment>
<comment type="miscellaneous">
    <text evidence="3">Present with 13700 molecules/cell in log phase SD medium.</text>
</comment>
<comment type="similarity">
    <text evidence="10">Belongs to the diphosphomevalonate decarboxylase family.</text>
</comment>
<keyword id="KW-0002">3D-structure</keyword>
<keyword id="KW-0067">ATP-binding</keyword>
<keyword id="KW-0444">Lipid biosynthesis</keyword>
<keyword id="KW-0443">Lipid metabolism</keyword>
<keyword id="KW-0456">Lyase</keyword>
<keyword id="KW-0547">Nucleotide-binding</keyword>
<keyword id="KW-1185">Reference proteome</keyword>
<keyword id="KW-0752">Steroid biosynthesis</keyword>
<keyword id="KW-0753">Steroid metabolism</keyword>
<keyword id="KW-0756">Sterol biosynthesis</keyword>
<keyword id="KW-1207">Sterol metabolism</keyword>
<sequence>MTVYTASVTAPVNIATLKYWGKRDTKLNLPTNSSISVTLSQDDLRTLTSAATAPEFERDTLWLNGEPHSIDNERTQNCLRDLRQLRKEMESKDASLPTLSQWKLHIVSENNFPTAAGLASSAAGFAALVSAIAKLYQLPQSTSEISRIARKGSGSACRSLFGGYVAWEMGKAEDGHDSMAVQIADSSDWPQMKACVLVVSDIKKDVSSTQGMQLTVATSELFKERIEHVVPKRFEVMRKAIVEKDFATFAKETMMDSNSFHATCLDSFPPIFYMNDTSKRIISWCHTINQFYGETIVAYTFDAGPNAVLYYLAENESKLFAFIYKLFGSVPGWDKKFTTEQLEAFNHQFESSNFTARELDLELQKDVARVILTQVGSGPQETNESLIDAKTGLPKE</sequence>
<name>MVD1_YEAST</name>
<reference key="1">
    <citation type="journal article" date="1996" name="J. Biol. Chem.">
        <title>Molecular cloning and expression of the cDNAs encoding human and yeast mevalonate pyrophosphate decarboxylase.</title>
        <authorList>
            <person name="Toth M.J."/>
            <person name="Huwyler L."/>
        </authorList>
    </citation>
    <scope>NUCLEOTIDE SEQUENCE [MRNA]</scope>
    <scope>FUNCTION</scope>
    <scope>CATALYTIC ACTIVITY</scope>
    <scope>PATHWAY</scope>
</reference>
<reference key="2">
    <citation type="journal article" date="1997" name="J. Bacteriol.">
        <title>The Saccharomyces cerevisiae mevalonate diphosphate decarboxylase is essential for viability, and a single Leu-to-Pro mutation in a conserved sequence leads to thermosensitivity.</title>
        <authorList>
            <person name="Berges T."/>
            <person name="Guyonnet D."/>
            <person name="Karst F."/>
        </authorList>
    </citation>
    <scope>NUCLEOTIDE SEQUENCE [GENOMIC DNA]</scope>
    <scope>FUNCTION</scope>
    <scope>MUTAGENESIS OF LEU-79</scope>
</reference>
<reference key="3">
    <citation type="journal article" date="1997" name="Nature">
        <title>The nucleotide sequence of Saccharomyces cerevisiae chromosome XIV and its evolutionary implications.</title>
        <authorList>
            <person name="Philippsen P."/>
            <person name="Kleine K."/>
            <person name="Poehlmann R."/>
            <person name="Duesterhoeft A."/>
            <person name="Hamberg K."/>
            <person name="Hegemann J.H."/>
            <person name="Obermaier B."/>
            <person name="Urrestarazu L.A."/>
            <person name="Aert R."/>
            <person name="Albermann K."/>
            <person name="Altmann R."/>
            <person name="Andre B."/>
            <person name="Baladron V."/>
            <person name="Ballesta J.P.G."/>
            <person name="Becam A.-M."/>
            <person name="Beinhauer J.D."/>
            <person name="Boskovic J."/>
            <person name="Buitrago M.J."/>
            <person name="Bussereau F."/>
            <person name="Coster F."/>
            <person name="Crouzet M."/>
            <person name="D'Angelo M."/>
            <person name="Dal Pero F."/>
            <person name="De Antoni A."/>
            <person name="del Rey F."/>
            <person name="Doignon F."/>
            <person name="Domdey H."/>
            <person name="Dubois E."/>
            <person name="Fiedler T.A."/>
            <person name="Fleig U."/>
            <person name="Floeth M."/>
            <person name="Fritz C."/>
            <person name="Gaillardin C."/>
            <person name="Garcia-Cantalejo J.M."/>
            <person name="Glansdorff N."/>
            <person name="Goffeau A."/>
            <person name="Gueldener U."/>
            <person name="Herbert C.J."/>
            <person name="Heumann K."/>
            <person name="Heuss-Neitzel D."/>
            <person name="Hilbert H."/>
            <person name="Hinni K."/>
            <person name="Iraqui Houssaini I."/>
            <person name="Jacquet M."/>
            <person name="Jimenez A."/>
            <person name="Jonniaux J.-L."/>
            <person name="Karpfinger-Hartl L."/>
            <person name="Lanfranchi G."/>
            <person name="Lepingle A."/>
            <person name="Levesque H."/>
            <person name="Lyck R."/>
            <person name="Maftahi M."/>
            <person name="Mallet L."/>
            <person name="Maurer C.T.C."/>
            <person name="Messenguy F."/>
            <person name="Mewes H.-W."/>
            <person name="Moestl D."/>
            <person name="Nasr F."/>
            <person name="Nicaud J.-M."/>
            <person name="Niedenthal R.K."/>
            <person name="Pandolfo D."/>
            <person name="Pierard A."/>
            <person name="Piravandi E."/>
            <person name="Planta R.J."/>
            <person name="Pohl T.M."/>
            <person name="Purnelle B."/>
            <person name="Rebischung C."/>
            <person name="Remacha M.A."/>
            <person name="Revuelta J.L."/>
            <person name="Rinke M."/>
            <person name="Saiz J.E."/>
            <person name="Sartorello F."/>
            <person name="Scherens B."/>
            <person name="Sen-Gupta M."/>
            <person name="Soler-Mira A."/>
            <person name="Urbanus J.H.M."/>
            <person name="Valle G."/>
            <person name="Van Dyck L."/>
            <person name="Verhasselt P."/>
            <person name="Vierendeels F."/>
            <person name="Vissers S."/>
            <person name="Voet M."/>
            <person name="Volckaert G."/>
            <person name="Wach A."/>
            <person name="Wambutt R."/>
            <person name="Wedler H."/>
            <person name="Zollner A."/>
            <person name="Hani J."/>
        </authorList>
    </citation>
    <scope>NUCLEOTIDE SEQUENCE [LARGE SCALE GENOMIC DNA]</scope>
    <source>
        <strain>ATCC 204508 / S288c</strain>
    </source>
</reference>
<reference key="4">
    <citation type="journal article" date="2014" name="G3 (Bethesda)">
        <title>The reference genome sequence of Saccharomyces cerevisiae: Then and now.</title>
        <authorList>
            <person name="Engel S.R."/>
            <person name="Dietrich F.S."/>
            <person name="Fisk D.G."/>
            <person name="Binkley G."/>
            <person name="Balakrishnan R."/>
            <person name="Costanzo M.C."/>
            <person name="Dwight S.S."/>
            <person name="Hitz B.C."/>
            <person name="Karra K."/>
            <person name="Nash R.S."/>
            <person name="Weng S."/>
            <person name="Wong E.D."/>
            <person name="Lloyd P."/>
            <person name="Skrzypek M.S."/>
            <person name="Miyasato S.R."/>
            <person name="Simison M."/>
            <person name="Cherry J.M."/>
        </authorList>
    </citation>
    <scope>GENOME REANNOTATION</scope>
    <source>
        <strain>ATCC 204508 / S288c</strain>
    </source>
</reference>
<reference key="5">
    <citation type="journal article" date="2007" name="Genome Res.">
        <title>Approaching a complete repository of sequence-verified protein-encoding clones for Saccharomyces cerevisiae.</title>
        <authorList>
            <person name="Hu Y."/>
            <person name="Rolfs A."/>
            <person name="Bhullar B."/>
            <person name="Murthy T.V.S."/>
            <person name="Zhu C."/>
            <person name="Berger M.F."/>
            <person name="Camargo A.A."/>
            <person name="Kelley F."/>
            <person name="McCarron S."/>
            <person name="Jepson D."/>
            <person name="Richardson A."/>
            <person name="Raphael J."/>
            <person name="Moreira D."/>
            <person name="Taycher E."/>
            <person name="Zuo D."/>
            <person name="Mohr S."/>
            <person name="Kane M.F."/>
            <person name="Williamson J."/>
            <person name="Simpson A.J.G."/>
            <person name="Bulyk M.L."/>
            <person name="Harlow E."/>
            <person name="Marsischky G."/>
            <person name="Kolodner R.D."/>
            <person name="LaBaer J."/>
        </authorList>
    </citation>
    <scope>NUCLEOTIDE SEQUENCE [GENOMIC DNA]</scope>
    <source>
        <strain>ATCC 204508 / S288c</strain>
    </source>
</reference>
<reference key="6">
    <citation type="journal article" date="1992" name="J. Biol. Chem.">
        <title>COQ2 is a candidate for the structural gene encoding para-hydroxybenzoate:polyprenyltransferase.</title>
        <authorList>
            <person name="Ashby M.N."/>
            <person name="Kutsunai S.Y."/>
            <person name="Ackerman S."/>
            <person name="Tzagoloff A."/>
            <person name="Edwards P.A."/>
        </authorList>
    </citation>
    <scope>NUCLEOTIDE SEQUENCE [GENOMIC DNA] OF 1-194</scope>
</reference>
<reference key="7">
    <citation type="journal article" date="2003" name="Nature">
        <title>Global analysis of protein expression in yeast.</title>
        <authorList>
            <person name="Ghaemmaghami S."/>
            <person name="Huh W.-K."/>
            <person name="Bower K."/>
            <person name="Howson R.W."/>
            <person name="Belle A."/>
            <person name="Dephoure N."/>
            <person name="O'Shea E.K."/>
            <person name="Weissman J.S."/>
        </authorList>
    </citation>
    <scope>LEVEL OF PROTEIN EXPRESSION [LARGE SCALE ANALYSIS]</scope>
</reference>
<reference key="8">
    <citation type="journal article" date="2020" name="Genes (Basel)">
        <title>Regulation of ergosterol biosynthesis in Saccharomyces cerevisiae.</title>
        <authorList>
            <person name="Jorda T."/>
            <person name="Puig S."/>
        </authorList>
    </citation>
    <scope>REVIEW ON ERGOSTEROL BIOSYNTHESIS</scope>
</reference>
<reference key="9">
    <citation type="journal article" date="2001" name="Proc. Natl. Acad. Sci. U.S.A.">
        <title>Structural genomics of enzymes involved in sterol/isoprenoid biosynthesis.</title>
        <authorList>
            <person name="Bonanno J.B."/>
            <person name="Edo C."/>
            <person name="Eswar N."/>
            <person name="Pieper U."/>
            <person name="Romanowski M.J."/>
            <person name="Ilyin V."/>
            <person name="Gerchman S.E."/>
            <person name="Kycia H."/>
            <person name="Studier F.W."/>
            <person name="Sali A."/>
            <person name="Burley S.K."/>
        </authorList>
    </citation>
    <scope>X-RAY CRYSTALLOGRAPHY (2.27 ANGSTROMS)</scope>
    <scope>SUBUNIT</scope>
</reference>
<evidence type="ECO:0000250" key="1">
    <source>
        <dbReference type="UniProtKB" id="O23722"/>
    </source>
</evidence>
<evidence type="ECO:0000269" key="2">
    <source>
    </source>
</evidence>
<evidence type="ECO:0000269" key="3">
    <source>
    </source>
</evidence>
<evidence type="ECO:0000269" key="4">
    <source>
    </source>
</evidence>
<evidence type="ECO:0000269" key="5">
    <source>
    </source>
</evidence>
<evidence type="ECO:0000303" key="6">
    <source>
    </source>
</evidence>
<evidence type="ECO:0000303" key="7">
    <source>
    </source>
</evidence>
<evidence type="ECO:0000303" key="8">
    <source>
    </source>
</evidence>
<evidence type="ECO:0000303" key="9">
    <source>
    </source>
</evidence>
<evidence type="ECO:0000305" key="10"/>
<evidence type="ECO:0007829" key="11">
    <source>
        <dbReference type="PDB" id="1FI4"/>
    </source>
</evidence>
<protein>
    <recommendedName>
        <fullName evidence="9">Diphosphomevalonate decarboxylase</fullName>
        <ecNumber evidence="4">4.1.1.33</ecNumber>
    </recommendedName>
    <alternativeName>
        <fullName evidence="9">Ergosterol biosynthesis protein 19</fullName>
    </alternativeName>
    <alternativeName>
        <fullName evidence="8">Mevalonate pyrophosphate decarboxylase</fullName>
        <shortName evidence="8">MPD</shortName>
    </alternativeName>
    <alternativeName>
        <fullName evidence="6">Mevalonate-5-diphosphate decarboxylase</fullName>
        <shortName evidence="6">MDD</shortName>
        <shortName evidence="6">MDDase</shortName>
    </alternativeName>
</protein>
<organism>
    <name type="scientific">Saccharomyces cerevisiae (strain ATCC 204508 / S288c)</name>
    <name type="common">Baker's yeast</name>
    <dbReference type="NCBI Taxonomy" id="559292"/>
    <lineage>
        <taxon>Eukaryota</taxon>
        <taxon>Fungi</taxon>
        <taxon>Dikarya</taxon>
        <taxon>Ascomycota</taxon>
        <taxon>Saccharomycotina</taxon>
        <taxon>Saccharomycetes</taxon>
        <taxon>Saccharomycetales</taxon>
        <taxon>Saccharomycetaceae</taxon>
        <taxon>Saccharomyces</taxon>
    </lineage>
</organism>
<feature type="chain" id="PRO_0000087015" description="Diphosphomevalonate decarboxylase">
    <location>
        <begin position="1"/>
        <end position="396"/>
    </location>
</feature>
<feature type="binding site" evidence="1">
    <location>
        <begin position="19"/>
        <end position="22"/>
    </location>
    <ligand>
        <name>(R)-5-diphosphomevalonate</name>
        <dbReference type="ChEBI" id="CHEBI:57557"/>
    </ligand>
</feature>
<feature type="binding site" evidence="1">
    <location>
        <position position="74"/>
    </location>
    <ligand>
        <name>(R)-5-diphosphomevalonate</name>
        <dbReference type="ChEBI" id="CHEBI:57557"/>
    </ligand>
</feature>
<feature type="binding site" evidence="1">
    <location>
        <begin position="153"/>
        <end position="158"/>
    </location>
    <ligand>
        <name>(R)-5-diphosphomevalonate</name>
        <dbReference type="ChEBI" id="CHEBI:57557"/>
    </ligand>
</feature>
<feature type="binding site" evidence="1">
    <location>
        <position position="209"/>
    </location>
    <ligand>
        <name>(R)-5-diphosphomevalonate</name>
        <dbReference type="ChEBI" id="CHEBI:57557"/>
    </ligand>
</feature>
<feature type="mutagenesis site" description="Leads to thermosensitivity." evidence="5">
    <original>L</original>
    <variation>P</variation>
    <location>
        <position position="79"/>
    </location>
</feature>
<feature type="sequence conflict" description="In Ref. 5; AAT93171." evidence="10" ref="5">
    <original>L</original>
    <variation>S</variation>
    <location>
        <position position="160"/>
    </location>
</feature>
<feature type="strand" evidence="11">
    <location>
        <begin position="4"/>
        <end position="10"/>
    </location>
</feature>
<feature type="strand" evidence="11">
    <location>
        <begin position="13"/>
        <end position="17"/>
    </location>
</feature>
<feature type="strand" evidence="11">
    <location>
        <begin position="22"/>
        <end position="24"/>
    </location>
</feature>
<feature type="turn" evidence="11">
    <location>
        <begin position="25"/>
        <end position="28"/>
    </location>
</feature>
<feature type="strand" evidence="11">
    <location>
        <begin position="29"/>
        <end position="32"/>
    </location>
</feature>
<feature type="strand" evidence="11">
    <location>
        <begin position="34"/>
        <end position="39"/>
    </location>
</feature>
<feature type="turn" evidence="11">
    <location>
        <begin position="41"/>
        <end position="43"/>
    </location>
</feature>
<feature type="strand" evidence="11">
    <location>
        <begin position="46"/>
        <end position="52"/>
    </location>
</feature>
<feature type="turn" evidence="11">
    <location>
        <begin position="62"/>
        <end position="64"/>
    </location>
</feature>
<feature type="strand" evidence="11">
    <location>
        <begin position="67"/>
        <end position="74"/>
    </location>
</feature>
<feature type="helix" evidence="11">
    <location>
        <begin position="75"/>
        <end position="90"/>
    </location>
</feature>
<feature type="helix" evidence="11">
    <location>
        <begin position="99"/>
        <end position="101"/>
    </location>
</feature>
<feature type="strand" evidence="11">
    <location>
        <begin position="104"/>
        <end position="110"/>
    </location>
</feature>
<feature type="helix" evidence="11">
    <location>
        <begin position="120"/>
        <end position="135"/>
    </location>
</feature>
<feature type="helix" evidence="11">
    <location>
        <begin position="142"/>
        <end position="153"/>
    </location>
</feature>
<feature type="helix" evidence="11">
    <location>
        <begin position="154"/>
        <end position="160"/>
    </location>
</feature>
<feature type="strand" evidence="11">
    <location>
        <begin position="161"/>
        <end position="168"/>
    </location>
</feature>
<feature type="strand" evidence="11">
    <location>
        <begin position="179"/>
        <end position="184"/>
    </location>
</feature>
<feature type="helix" evidence="11">
    <location>
        <begin position="186"/>
        <end position="188"/>
    </location>
</feature>
<feature type="strand" evidence="11">
    <location>
        <begin position="192"/>
        <end position="199"/>
    </location>
</feature>
<feature type="helix" evidence="11">
    <location>
        <begin position="208"/>
        <end position="218"/>
    </location>
</feature>
<feature type="helix" evidence="11">
    <location>
        <begin position="221"/>
        <end position="227"/>
    </location>
</feature>
<feature type="helix" evidence="11">
    <location>
        <begin position="229"/>
        <end position="242"/>
    </location>
</feature>
<feature type="helix" evidence="11">
    <location>
        <begin position="246"/>
        <end position="265"/>
    </location>
</feature>
<feature type="strand" evidence="11">
    <location>
        <begin position="267"/>
        <end position="269"/>
    </location>
</feature>
<feature type="helix" evidence="11">
    <location>
        <begin position="276"/>
        <end position="292"/>
    </location>
</feature>
<feature type="strand" evidence="11">
    <location>
        <begin position="297"/>
        <end position="301"/>
    </location>
</feature>
<feature type="strand" evidence="11">
    <location>
        <begin position="303"/>
        <end position="305"/>
    </location>
</feature>
<feature type="strand" evidence="11">
    <location>
        <begin position="307"/>
        <end position="312"/>
    </location>
</feature>
<feature type="helix" evidence="11">
    <location>
        <begin position="313"/>
        <end position="315"/>
    </location>
</feature>
<feature type="helix" evidence="11">
    <location>
        <begin position="316"/>
        <end position="327"/>
    </location>
</feature>
<feature type="turn" evidence="11">
    <location>
        <begin position="334"/>
        <end position="336"/>
    </location>
</feature>
<feature type="helix" evidence="11">
    <location>
        <begin position="339"/>
        <end position="350"/>
    </location>
</feature>
<feature type="helix" evidence="11">
    <location>
        <begin position="363"/>
        <end position="366"/>
    </location>
</feature>
<feature type="strand" evidence="11">
    <location>
        <begin position="367"/>
        <end position="375"/>
    </location>
</feature>
<feature type="strand" evidence="11">
    <location>
        <begin position="389"/>
        <end position="391"/>
    </location>
</feature>
<accession>P32377</accession>
<accession>D6W1L8</accession>
<accession>Q6B1C8</accession>
<gene>
    <name evidence="6" type="primary">MVD1</name>
    <name evidence="9" type="synonym">ERG19</name>
    <name evidence="8" type="synonym">MPD</name>
    <name type="ordered locus">YNR043W</name>
    <name type="ORF">N3427</name>
</gene>
<proteinExistence type="evidence at protein level"/>